<comment type="function">
    <text evidence="1">RuBisCO catalyzes two reactions: the carboxylation of D-ribulose 1,5-bisphosphate, the primary event in carbon dioxide fixation, as well as the oxidative fragmentation of the pentose substrate in the photorespiration process. Both reactions occur simultaneously and in competition at the same active site.</text>
</comment>
<comment type="catalytic activity">
    <reaction evidence="1">
        <text>2 (2R)-3-phosphoglycerate + 2 H(+) = D-ribulose 1,5-bisphosphate + CO2 + H2O</text>
        <dbReference type="Rhea" id="RHEA:23124"/>
        <dbReference type="ChEBI" id="CHEBI:15377"/>
        <dbReference type="ChEBI" id="CHEBI:15378"/>
        <dbReference type="ChEBI" id="CHEBI:16526"/>
        <dbReference type="ChEBI" id="CHEBI:57870"/>
        <dbReference type="ChEBI" id="CHEBI:58272"/>
        <dbReference type="EC" id="4.1.1.39"/>
    </reaction>
</comment>
<comment type="catalytic activity">
    <reaction evidence="1">
        <text>D-ribulose 1,5-bisphosphate + O2 = 2-phosphoglycolate + (2R)-3-phosphoglycerate + 2 H(+)</text>
        <dbReference type="Rhea" id="RHEA:36631"/>
        <dbReference type="ChEBI" id="CHEBI:15378"/>
        <dbReference type="ChEBI" id="CHEBI:15379"/>
        <dbReference type="ChEBI" id="CHEBI:57870"/>
        <dbReference type="ChEBI" id="CHEBI:58033"/>
        <dbReference type="ChEBI" id="CHEBI:58272"/>
    </reaction>
</comment>
<comment type="cofactor">
    <cofactor evidence="1">
        <name>Mg(2+)</name>
        <dbReference type="ChEBI" id="CHEBI:18420"/>
    </cofactor>
    <text evidence="1">Binds 1 Mg(2+) ion per subunit.</text>
</comment>
<comment type="subunit">
    <text evidence="1">Heterohexadecamer of 8 large chains and 8 small chains; disulfide-linked. The disulfide link is formed within the large subunit homodimers.</text>
</comment>
<comment type="subcellular location">
    <subcellularLocation>
        <location>Plastid</location>
        <location>Chloroplast</location>
    </subcellularLocation>
</comment>
<comment type="PTM">
    <text evidence="1">The disulfide bond which can form in the large chain dimeric partners within the hexadecamer appears to be associated with oxidative stress and protein turnover.</text>
</comment>
<comment type="miscellaneous">
    <text evidence="1">The basic functional RuBisCO is composed of a large chain homodimer in a 'head-to-tail' conformation. In form I RuBisCO this homodimer is arranged in a barrel-like tetramer with the small subunits forming a tetrameric 'cap' on each end of the 'barrel'.</text>
</comment>
<comment type="similarity">
    <text evidence="1">Belongs to the RuBisCO large chain family. Type I subfamily.</text>
</comment>
<proteinExistence type="inferred from homology"/>
<sequence length="477" mass="52929">MSPQTETKASVGFKAGVKDYKLTYYTPDYETKDTDILAAFRVTPQPGVPPEEAGAAVAAESSTGTWTTVWTDGLTSLDRYKGRCYGIEPVPGEESQFIAYVAYPLDLFEEGSVTNMFTSIVGKVFGFKALRALRLEDLRIPIAYVKTFQGPRHGIQVERDKLNKYGRPLLGCTIKPKLGLSAKNYGRAVYECLRGGLDFTKDDENVNSQPFMRWRDRFLFCTEALFKAQTETGEIKGHYLNATAGTCEEMMKRAVFARELGVPIIMHDYLTGGFTANTTLAHYCRDNGLLLHIHRAMHAVIDRQKNHGMHFRVLAKALRMSGGDHIHSGTVVGKLEGEREITLGFVDLLRDDFIEKDRSRGIYFTQDWVSLPGVLPVASGGIHVWHMPALTEIFGDDSVLQFGGGTLGHPWGNAPGAVANRVALEACVQARNEGRDLAREGNEIIREAAKWSPELAAACEVWKAIKFEFNPVDTLDX</sequence>
<protein>
    <recommendedName>
        <fullName evidence="1">Ribulose bisphosphate carboxylase large chain</fullName>
        <shortName evidence="1">RuBisCO large subunit</shortName>
        <ecNumber evidence="1">4.1.1.39</ecNumber>
    </recommendedName>
</protein>
<feature type="propeptide" id="PRO_0000031241" evidence="1">
    <location>
        <begin position="1"/>
        <end position="2"/>
    </location>
</feature>
<feature type="chain" id="PRO_0000031242" description="Ribulose bisphosphate carboxylase large chain">
    <location>
        <begin position="3"/>
        <end position="477"/>
    </location>
</feature>
<feature type="active site" description="Proton acceptor" evidence="1">
    <location>
        <position position="175"/>
    </location>
</feature>
<feature type="active site" description="Proton acceptor" evidence="1">
    <location>
        <position position="294"/>
    </location>
</feature>
<feature type="binding site" evidence="1">
    <location>
        <position position="173"/>
    </location>
    <ligand>
        <name>substrate</name>
    </ligand>
</feature>
<feature type="binding site" evidence="1">
    <location>
        <position position="177"/>
    </location>
    <ligand>
        <name>substrate</name>
    </ligand>
</feature>
<feature type="binding site" description="via carbamate group" evidence="1">
    <location>
        <position position="201"/>
    </location>
    <ligand>
        <name>Mg(2+)</name>
        <dbReference type="ChEBI" id="CHEBI:18420"/>
    </ligand>
</feature>
<feature type="binding site" evidence="1">
    <location>
        <position position="203"/>
    </location>
    <ligand>
        <name>Mg(2+)</name>
        <dbReference type="ChEBI" id="CHEBI:18420"/>
    </ligand>
</feature>
<feature type="binding site" evidence="1">
    <location>
        <position position="204"/>
    </location>
    <ligand>
        <name>Mg(2+)</name>
        <dbReference type="ChEBI" id="CHEBI:18420"/>
    </ligand>
</feature>
<feature type="binding site" evidence="1">
    <location>
        <position position="295"/>
    </location>
    <ligand>
        <name>substrate</name>
    </ligand>
</feature>
<feature type="binding site" evidence="1">
    <location>
        <position position="327"/>
    </location>
    <ligand>
        <name>substrate</name>
    </ligand>
</feature>
<feature type="binding site" evidence="1">
    <location>
        <position position="379"/>
    </location>
    <ligand>
        <name>substrate</name>
    </ligand>
</feature>
<feature type="site" description="Transition state stabilizer" evidence="1">
    <location>
        <position position="334"/>
    </location>
</feature>
<feature type="modified residue" description="N-acetylproline" evidence="1">
    <location>
        <position position="3"/>
    </location>
</feature>
<feature type="modified residue" description="N6,N6,N6-trimethyllysine" evidence="1">
    <location>
        <position position="14"/>
    </location>
</feature>
<feature type="modified residue" description="N6-carboxylysine" evidence="1">
    <location>
        <position position="201"/>
    </location>
</feature>
<feature type="disulfide bond" description="Interchain; in linked form" evidence="1">
    <location>
        <position position="247"/>
    </location>
</feature>
<reference key="1">
    <citation type="journal article" date="1992" name="Ann. Mo. Bot. Gard.">
        <title>Phylogenetic implications of rbcL sequence variation in the Asteraceae.</title>
        <authorList>
            <person name="Kim K.-J."/>
            <person name="Jansen R.K."/>
            <person name="Wallace R.S."/>
            <person name="Michaels H.J."/>
            <person name="Palmer J.D."/>
        </authorList>
        <dbReference type="AGRICOLA" id="IND93015009"/>
    </citation>
    <scope>NUCLEOTIDE SEQUENCE [GENOMIC DNA]</scope>
</reference>
<evidence type="ECO:0000255" key="1">
    <source>
        <dbReference type="HAMAP-Rule" id="MF_01338"/>
    </source>
</evidence>
<keyword id="KW-0007">Acetylation</keyword>
<keyword id="KW-0113">Calvin cycle</keyword>
<keyword id="KW-0120">Carbon dioxide fixation</keyword>
<keyword id="KW-0150">Chloroplast</keyword>
<keyword id="KW-1015">Disulfide bond</keyword>
<keyword id="KW-0456">Lyase</keyword>
<keyword id="KW-0460">Magnesium</keyword>
<keyword id="KW-0479">Metal-binding</keyword>
<keyword id="KW-0488">Methylation</keyword>
<keyword id="KW-0503">Monooxygenase</keyword>
<keyword id="KW-0560">Oxidoreductase</keyword>
<keyword id="KW-0601">Photorespiration</keyword>
<keyword id="KW-0602">Photosynthesis</keyword>
<keyword id="KW-0934">Plastid</keyword>
<gene>
    <name evidence="1" type="primary">rbcL</name>
</gene>
<geneLocation type="chloroplast"/>
<name>RBL_GERJA</name>
<accession>P51101</accession>
<dbReference type="EC" id="4.1.1.39" evidence="1"/>
<dbReference type="EMBL" id="L13643">
    <property type="protein sequence ID" value="AAA84260.1"/>
    <property type="molecule type" value="Genomic_DNA"/>
</dbReference>
<dbReference type="GO" id="GO:0009507">
    <property type="term" value="C:chloroplast"/>
    <property type="evidence" value="ECO:0007669"/>
    <property type="project" value="UniProtKB-SubCell"/>
</dbReference>
<dbReference type="GO" id="GO:0000287">
    <property type="term" value="F:magnesium ion binding"/>
    <property type="evidence" value="ECO:0007669"/>
    <property type="project" value="UniProtKB-UniRule"/>
</dbReference>
<dbReference type="GO" id="GO:0004497">
    <property type="term" value="F:monooxygenase activity"/>
    <property type="evidence" value="ECO:0007669"/>
    <property type="project" value="UniProtKB-KW"/>
</dbReference>
<dbReference type="GO" id="GO:0016984">
    <property type="term" value="F:ribulose-bisphosphate carboxylase activity"/>
    <property type="evidence" value="ECO:0007669"/>
    <property type="project" value="UniProtKB-UniRule"/>
</dbReference>
<dbReference type="GO" id="GO:0009853">
    <property type="term" value="P:photorespiration"/>
    <property type="evidence" value="ECO:0007669"/>
    <property type="project" value="UniProtKB-KW"/>
</dbReference>
<dbReference type="GO" id="GO:0019253">
    <property type="term" value="P:reductive pentose-phosphate cycle"/>
    <property type="evidence" value="ECO:0007669"/>
    <property type="project" value="UniProtKB-UniRule"/>
</dbReference>
<dbReference type="CDD" id="cd08212">
    <property type="entry name" value="RuBisCO_large_I"/>
    <property type="match status" value="1"/>
</dbReference>
<dbReference type="FunFam" id="3.20.20.110:FF:000001">
    <property type="entry name" value="Ribulose bisphosphate carboxylase large chain"/>
    <property type="match status" value="1"/>
</dbReference>
<dbReference type="FunFam" id="3.30.70.150:FF:000001">
    <property type="entry name" value="Ribulose bisphosphate carboxylase large chain"/>
    <property type="match status" value="1"/>
</dbReference>
<dbReference type="Gene3D" id="3.20.20.110">
    <property type="entry name" value="Ribulose bisphosphate carboxylase, large subunit, C-terminal domain"/>
    <property type="match status" value="1"/>
</dbReference>
<dbReference type="Gene3D" id="3.30.70.150">
    <property type="entry name" value="RuBisCO large subunit, N-terminal domain"/>
    <property type="match status" value="1"/>
</dbReference>
<dbReference type="HAMAP" id="MF_01338">
    <property type="entry name" value="RuBisCO_L_type1"/>
    <property type="match status" value="1"/>
</dbReference>
<dbReference type="InterPro" id="IPR033966">
    <property type="entry name" value="RuBisCO"/>
</dbReference>
<dbReference type="InterPro" id="IPR020878">
    <property type="entry name" value="RuBisCo_large_chain_AS"/>
</dbReference>
<dbReference type="InterPro" id="IPR000685">
    <property type="entry name" value="RuBisCO_lsu_C"/>
</dbReference>
<dbReference type="InterPro" id="IPR036376">
    <property type="entry name" value="RuBisCO_lsu_C_sf"/>
</dbReference>
<dbReference type="InterPro" id="IPR017443">
    <property type="entry name" value="RuBisCO_lsu_fd_N"/>
</dbReference>
<dbReference type="InterPro" id="IPR036422">
    <property type="entry name" value="RuBisCO_lsu_N_sf"/>
</dbReference>
<dbReference type="InterPro" id="IPR020888">
    <property type="entry name" value="RuBisCO_lsuI"/>
</dbReference>
<dbReference type="NCBIfam" id="NF003252">
    <property type="entry name" value="PRK04208.1"/>
    <property type="match status" value="1"/>
</dbReference>
<dbReference type="PANTHER" id="PTHR42704">
    <property type="entry name" value="RIBULOSE BISPHOSPHATE CARBOXYLASE"/>
    <property type="match status" value="1"/>
</dbReference>
<dbReference type="PANTHER" id="PTHR42704:SF15">
    <property type="entry name" value="RIBULOSE BISPHOSPHATE CARBOXYLASE LARGE CHAIN"/>
    <property type="match status" value="1"/>
</dbReference>
<dbReference type="Pfam" id="PF00016">
    <property type="entry name" value="RuBisCO_large"/>
    <property type="match status" value="1"/>
</dbReference>
<dbReference type="Pfam" id="PF02788">
    <property type="entry name" value="RuBisCO_large_N"/>
    <property type="match status" value="1"/>
</dbReference>
<dbReference type="SFLD" id="SFLDG01052">
    <property type="entry name" value="RuBisCO"/>
    <property type="match status" value="1"/>
</dbReference>
<dbReference type="SFLD" id="SFLDS00014">
    <property type="entry name" value="RuBisCO"/>
    <property type="match status" value="1"/>
</dbReference>
<dbReference type="SFLD" id="SFLDG00301">
    <property type="entry name" value="RuBisCO-like_proteins"/>
    <property type="match status" value="1"/>
</dbReference>
<dbReference type="SUPFAM" id="SSF51649">
    <property type="entry name" value="RuBisCo, C-terminal domain"/>
    <property type="match status" value="1"/>
</dbReference>
<dbReference type="SUPFAM" id="SSF54966">
    <property type="entry name" value="RuBisCO, large subunit, small (N-terminal) domain"/>
    <property type="match status" value="1"/>
</dbReference>
<dbReference type="PROSITE" id="PS00157">
    <property type="entry name" value="RUBISCO_LARGE"/>
    <property type="match status" value="1"/>
</dbReference>
<organism>
    <name type="scientific">Gerbera jamesonii</name>
    <name type="common">Transvaal daisy</name>
    <dbReference type="NCBI Taxonomy" id="13547"/>
    <lineage>
        <taxon>Eukaryota</taxon>
        <taxon>Viridiplantae</taxon>
        <taxon>Streptophyta</taxon>
        <taxon>Embryophyta</taxon>
        <taxon>Tracheophyta</taxon>
        <taxon>Spermatophyta</taxon>
        <taxon>Magnoliopsida</taxon>
        <taxon>eudicotyledons</taxon>
        <taxon>Gunneridae</taxon>
        <taxon>Pentapetalae</taxon>
        <taxon>asterids</taxon>
        <taxon>campanulids</taxon>
        <taxon>Asterales</taxon>
        <taxon>Asteraceae</taxon>
        <taxon>Mutisioideae</taxon>
        <taxon>Mutisieae</taxon>
        <taxon>Gerbera</taxon>
    </lineage>
</organism>